<keyword id="KW-1003">Cell membrane</keyword>
<keyword id="KW-0472">Membrane</keyword>
<keyword id="KW-0520">NAD</keyword>
<keyword id="KW-0874">Quinone</keyword>
<keyword id="KW-1185">Reference proteome</keyword>
<keyword id="KW-1278">Translocase</keyword>
<keyword id="KW-0812">Transmembrane</keyword>
<keyword id="KW-1133">Transmembrane helix</keyword>
<keyword id="KW-0813">Transport</keyword>
<feature type="chain" id="PRO_0000390124" description="NADH-quinone oxidoreductase subunit K">
    <location>
        <begin position="1"/>
        <end position="99"/>
    </location>
</feature>
<feature type="transmembrane region" description="Helical" evidence="1">
    <location>
        <begin position="3"/>
        <end position="23"/>
    </location>
</feature>
<feature type="transmembrane region" description="Helical" evidence="1">
    <location>
        <begin position="28"/>
        <end position="48"/>
    </location>
</feature>
<feature type="transmembrane region" description="Helical" evidence="1">
    <location>
        <begin position="59"/>
        <end position="79"/>
    </location>
</feature>
<reference key="1">
    <citation type="journal article" date="2009" name="PLoS ONE">
        <title>Non mycobacterial virulence genes in the genome of the emerging pathogen Mycobacterium abscessus.</title>
        <authorList>
            <person name="Ripoll F."/>
            <person name="Pasek S."/>
            <person name="Schenowitz C."/>
            <person name="Dossat C."/>
            <person name="Barbe V."/>
            <person name="Rottman M."/>
            <person name="Macheras E."/>
            <person name="Heym B."/>
            <person name="Herrmann J.L."/>
            <person name="Daffe M."/>
            <person name="Brosch R."/>
            <person name="Risler J.L."/>
            <person name="Gaillard J.L."/>
        </authorList>
    </citation>
    <scope>NUCLEOTIDE SEQUENCE [LARGE SCALE GENOMIC DNA]</scope>
    <source>
        <strain>ATCC 19977 / DSM 44196 / CCUG 20993 / CIP 104536 / JCM 13569 / NCTC 13031 / TMC 1543 / L948</strain>
    </source>
</reference>
<gene>
    <name evidence="1" type="primary">nuoK</name>
    <name type="ordered locus">MAB_2144</name>
</gene>
<name>NUOK_MYCA9</name>
<sequence>MNPDNYLYLAALIFTIGAAGVMLRRNAIVVFMSVELMLNAANLAFVTFARMHGNLDGQVIAFFTMVVAATEVVVGLGIIMTIFRTRRSASVDDADVLKF</sequence>
<organism>
    <name type="scientific">Mycobacteroides abscessus (strain ATCC 19977 / DSM 44196 / CCUG 20993 / CIP 104536 / JCM 13569 / NCTC 13031 / TMC 1543 / L948)</name>
    <name type="common">Mycobacterium abscessus</name>
    <dbReference type="NCBI Taxonomy" id="561007"/>
    <lineage>
        <taxon>Bacteria</taxon>
        <taxon>Bacillati</taxon>
        <taxon>Actinomycetota</taxon>
        <taxon>Actinomycetes</taxon>
        <taxon>Mycobacteriales</taxon>
        <taxon>Mycobacteriaceae</taxon>
        <taxon>Mycobacteroides</taxon>
        <taxon>Mycobacteroides abscessus</taxon>
    </lineage>
</organism>
<evidence type="ECO:0000255" key="1">
    <source>
        <dbReference type="HAMAP-Rule" id="MF_01456"/>
    </source>
</evidence>
<comment type="function">
    <text evidence="1">NDH-1 shuttles electrons from NADH, via FMN and iron-sulfur (Fe-S) centers, to quinones in the respiratory chain. The immediate electron acceptor for the enzyme in this species is believed to be a menaquinone. Couples the redox reaction to proton translocation (for every two electrons transferred, four hydrogen ions are translocated across the cytoplasmic membrane), and thus conserves the redox energy in a proton gradient.</text>
</comment>
<comment type="catalytic activity">
    <reaction evidence="1">
        <text>a quinone + NADH + 5 H(+)(in) = a quinol + NAD(+) + 4 H(+)(out)</text>
        <dbReference type="Rhea" id="RHEA:57888"/>
        <dbReference type="ChEBI" id="CHEBI:15378"/>
        <dbReference type="ChEBI" id="CHEBI:24646"/>
        <dbReference type="ChEBI" id="CHEBI:57540"/>
        <dbReference type="ChEBI" id="CHEBI:57945"/>
        <dbReference type="ChEBI" id="CHEBI:132124"/>
    </reaction>
</comment>
<comment type="subunit">
    <text evidence="1">NDH-1 is composed of 14 different subunits. Subunits NuoA, H, J, K, L, M, N constitute the membrane sector of the complex.</text>
</comment>
<comment type="subcellular location">
    <subcellularLocation>
        <location evidence="1">Cell membrane</location>
        <topology evidence="1">Multi-pass membrane protein</topology>
    </subcellularLocation>
</comment>
<comment type="similarity">
    <text evidence="1">Belongs to the complex I subunit 4L family.</text>
</comment>
<proteinExistence type="inferred from homology"/>
<protein>
    <recommendedName>
        <fullName evidence="1">NADH-quinone oxidoreductase subunit K</fullName>
        <ecNumber evidence="1">7.1.1.-</ecNumber>
    </recommendedName>
    <alternativeName>
        <fullName evidence="1">NADH dehydrogenase I subunit K</fullName>
    </alternativeName>
    <alternativeName>
        <fullName evidence="1">NDH-1 subunit K</fullName>
    </alternativeName>
</protein>
<dbReference type="EC" id="7.1.1.-" evidence="1"/>
<dbReference type="EMBL" id="CU458896">
    <property type="protein sequence ID" value="CAM62225.1"/>
    <property type="molecule type" value="Genomic_DNA"/>
</dbReference>
<dbReference type="RefSeq" id="WP_005061219.1">
    <property type="nucleotide sequence ID" value="NZ_MLCG01000002.1"/>
</dbReference>
<dbReference type="SMR" id="B1MPH4"/>
<dbReference type="GeneID" id="93379080"/>
<dbReference type="KEGG" id="mab:MAB_2144"/>
<dbReference type="Proteomes" id="UP000007137">
    <property type="component" value="Chromosome"/>
</dbReference>
<dbReference type="GO" id="GO:0030964">
    <property type="term" value="C:NADH dehydrogenase complex"/>
    <property type="evidence" value="ECO:0007669"/>
    <property type="project" value="TreeGrafter"/>
</dbReference>
<dbReference type="GO" id="GO:0005886">
    <property type="term" value="C:plasma membrane"/>
    <property type="evidence" value="ECO:0007669"/>
    <property type="project" value="UniProtKB-SubCell"/>
</dbReference>
<dbReference type="GO" id="GO:0050136">
    <property type="term" value="F:NADH:ubiquinone reductase (non-electrogenic) activity"/>
    <property type="evidence" value="ECO:0007669"/>
    <property type="project" value="UniProtKB-UniRule"/>
</dbReference>
<dbReference type="GO" id="GO:0048038">
    <property type="term" value="F:quinone binding"/>
    <property type="evidence" value="ECO:0007669"/>
    <property type="project" value="UniProtKB-KW"/>
</dbReference>
<dbReference type="GO" id="GO:0042773">
    <property type="term" value="P:ATP synthesis coupled electron transport"/>
    <property type="evidence" value="ECO:0007669"/>
    <property type="project" value="InterPro"/>
</dbReference>
<dbReference type="FunFam" id="1.10.287.3510:FF:000001">
    <property type="entry name" value="NADH-quinone oxidoreductase subunit K"/>
    <property type="match status" value="1"/>
</dbReference>
<dbReference type="Gene3D" id="1.10.287.3510">
    <property type="match status" value="1"/>
</dbReference>
<dbReference type="HAMAP" id="MF_01456">
    <property type="entry name" value="NDH1_NuoK"/>
    <property type="match status" value="1"/>
</dbReference>
<dbReference type="InterPro" id="IPR001133">
    <property type="entry name" value="NADH_UbQ_OxRdtase_chain4L/K"/>
</dbReference>
<dbReference type="InterPro" id="IPR039428">
    <property type="entry name" value="NUOK/Mnh_C1-like"/>
</dbReference>
<dbReference type="NCBIfam" id="NF004320">
    <property type="entry name" value="PRK05715.1-2"/>
    <property type="match status" value="1"/>
</dbReference>
<dbReference type="PANTHER" id="PTHR11434:SF21">
    <property type="entry name" value="NADH DEHYDROGENASE SUBUNIT 4L-RELATED"/>
    <property type="match status" value="1"/>
</dbReference>
<dbReference type="PANTHER" id="PTHR11434">
    <property type="entry name" value="NADH-UBIQUINONE OXIDOREDUCTASE SUBUNIT ND4L"/>
    <property type="match status" value="1"/>
</dbReference>
<dbReference type="Pfam" id="PF00420">
    <property type="entry name" value="Oxidored_q2"/>
    <property type="match status" value="1"/>
</dbReference>
<accession>B1MPH4</accession>